<keyword id="KW-0560">Oxidoreductase</keyword>
<accession>B0U2B7</accession>
<feature type="chain" id="PRO_1000145446" description="Peptide methionine sulfoxide reductase MsrA">
    <location>
        <begin position="1"/>
        <end position="216"/>
    </location>
</feature>
<feature type="active site" evidence="1">
    <location>
        <position position="54"/>
    </location>
</feature>
<protein>
    <recommendedName>
        <fullName evidence="1">Peptide methionine sulfoxide reductase MsrA</fullName>
        <shortName evidence="1">Protein-methionine-S-oxide reductase</shortName>
        <ecNumber evidence="1">1.8.4.11</ecNumber>
    </recommendedName>
    <alternativeName>
        <fullName evidence="1">Peptide-methionine (S)-S-oxide reductase</fullName>
        <shortName evidence="1">Peptide Met(O) reductase</shortName>
    </alternativeName>
</protein>
<organism>
    <name type="scientific">Xylella fastidiosa (strain M12)</name>
    <dbReference type="NCBI Taxonomy" id="405440"/>
    <lineage>
        <taxon>Bacteria</taxon>
        <taxon>Pseudomonadati</taxon>
        <taxon>Pseudomonadota</taxon>
        <taxon>Gammaproteobacteria</taxon>
        <taxon>Lysobacterales</taxon>
        <taxon>Lysobacteraceae</taxon>
        <taxon>Xylella</taxon>
    </lineage>
</organism>
<dbReference type="EC" id="1.8.4.11" evidence="1"/>
<dbReference type="EMBL" id="CP000941">
    <property type="protein sequence ID" value="ACA11996.1"/>
    <property type="molecule type" value="Genomic_DNA"/>
</dbReference>
<dbReference type="RefSeq" id="WP_004085446.1">
    <property type="nucleotide sequence ID" value="NC_010513.1"/>
</dbReference>
<dbReference type="SMR" id="B0U2B7"/>
<dbReference type="KEGG" id="xfm:Xfasm12_1031"/>
<dbReference type="HOGENOM" id="CLU_031040_10_3_6"/>
<dbReference type="GO" id="GO:0005737">
    <property type="term" value="C:cytoplasm"/>
    <property type="evidence" value="ECO:0007669"/>
    <property type="project" value="TreeGrafter"/>
</dbReference>
<dbReference type="GO" id="GO:0036456">
    <property type="term" value="F:L-methionine-(S)-S-oxide reductase activity"/>
    <property type="evidence" value="ECO:0007669"/>
    <property type="project" value="TreeGrafter"/>
</dbReference>
<dbReference type="GO" id="GO:0008113">
    <property type="term" value="F:peptide-methionine (S)-S-oxide reductase activity"/>
    <property type="evidence" value="ECO:0007669"/>
    <property type="project" value="UniProtKB-UniRule"/>
</dbReference>
<dbReference type="GO" id="GO:0034599">
    <property type="term" value="P:cellular response to oxidative stress"/>
    <property type="evidence" value="ECO:0007669"/>
    <property type="project" value="TreeGrafter"/>
</dbReference>
<dbReference type="GO" id="GO:0036211">
    <property type="term" value="P:protein modification process"/>
    <property type="evidence" value="ECO:0007669"/>
    <property type="project" value="UniProtKB-UniRule"/>
</dbReference>
<dbReference type="FunFam" id="3.30.1060.10:FF:000001">
    <property type="entry name" value="Peptide methionine sulfoxide reductase MsrA"/>
    <property type="match status" value="1"/>
</dbReference>
<dbReference type="Gene3D" id="3.30.1060.10">
    <property type="entry name" value="Peptide methionine sulphoxide reductase MsrA"/>
    <property type="match status" value="1"/>
</dbReference>
<dbReference type="HAMAP" id="MF_01401">
    <property type="entry name" value="MsrA"/>
    <property type="match status" value="1"/>
</dbReference>
<dbReference type="InterPro" id="IPR002569">
    <property type="entry name" value="Met_Sox_Rdtase_MsrA_dom"/>
</dbReference>
<dbReference type="InterPro" id="IPR036509">
    <property type="entry name" value="Met_Sox_Rdtase_MsrA_sf"/>
</dbReference>
<dbReference type="InterPro" id="IPR050162">
    <property type="entry name" value="MsrA_MetSO_reductase"/>
</dbReference>
<dbReference type="NCBIfam" id="TIGR00401">
    <property type="entry name" value="msrA"/>
    <property type="match status" value="1"/>
</dbReference>
<dbReference type="PANTHER" id="PTHR42799">
    <property type="entry name" value="MITOCHONDRIAL PEPTIDE METHIONINE SULFOXIDE REDUCTASE"/>
    <property type="match status" value="1"/>
</dbReference>
<dbReference type="PANTHER" id="PTHR42799:SF2">
    <property type="entry name" value="MITOCHONDRIAL PEPTIDE METHIONINE SULFOXIDE REDUCTASE"/>
    <property type="match status" value="1"/>
</dbReference>
<dbReference type="Pfam" id="PF01625">
    <property type="entry name" value="PMSR"/>
    <property type="match status" value="1"/>
</dbReference>
<dbReference type="SUPFAM" id="SSF55068">
    <property type="entry name" value="Peptide methionine sulfoxide reductase"/>
    <property type="match status" value="1"/>
</dbReference>
<evidence type="ECO:0000255" key="1">
    <source>
        <dbReference type="HAMAP-Rule" id="MF_01401"/>
    </source>
</evidence>
<gene>
    <name evidence="1" type="primary">msrA</name>
    <name type="ordered locus">Xfasm12_1031</name>
</gene>
<comment type="function">
    <text evidence="1">Has an important function as a repair enzyme for proteins that have been inactivated by oxidation. Catalyzes the reversible oxidation-reduction of methionine sulfoxide in proteins to methionine.</text>
</comment>
<comment type="catalytic activity">
    <reaction evidence="1">
        <text>L-methionyl-[protein] + [thioredoxin]-disulfide + H2O = L-methionyl-(S)-S-oxide-[protein] + [thioredoxin]-dithiol</text>
        <dbReference type="Rhea" id="RHEA:14217"/>
        <dbReference type="Rhea" id="RHEA-COMP:10698"/>
        <dbReference type="Rhea" id="RHEA-COMP:10700"/>
        <dbReference type="Rhea" id="RHEA-COMP:12313"/>
        <dbReference type="Rhea" id="RHEA-COMP:12315"/>
        <dbReference type="ChEBI" id="CHEBI:15377"/>
        <dbReference type="ChEBI" id="CHEBI:16044"/>
        <dbReference type="ChEBI" id="CHEBI:29950"/>
        <dbReference type="ChEBI" id="CHEBI:44120"/>
        <dbReference type="ChEBI" id="CHEBI:50058"/>
        <dbReference type="EC" id="1.8.4.11"/>
    </reaction>
</comment>
<comment type="catalytic activity">
    <reaction evidence="1">
        <text>[thioredoxin]-disulfide + L-methionine + H2O = L-methionine (S)-S-oxide + [thioredoxin]-dithiol</text>
        <dbReference type="Rhea" id="RHEA:19993"/>
        <dbReference type="Rhea" id="RHEA-COMP:10698"/>
        <dbReference type="Rhea" id="RHEA-COMP:10700"/>
        <dbReference type="ChEBI" id="CHEBI:15377"/>
        <dbReference type="ChEBI" id="CHEBI:29950"/>
        <dbReference type="ChEBI" id="CHEBI:50058"/>
        <dbReference type="ChEBI" id="CHEBI:57844"/>
        <dbReference type="ChEBI" id="CHEBI:58772"/>
        <dbReference type="EC" id="1.8.4.11"/>
    </reaction>
</comment>
<comment type="similarity">
    <text evidence="1">Belongs to the MsrA Met sulfoxide reductase family.</text>
</comment>
<name>MSRA_XYLFM</name>
<reference key="1">
    <citation type="journal article" date="2010" name="J. Bacteriol.">
        <title>Whole genome sequences of two Xylella fastidiosa strains (M12 and M23) causing almond leaf scorch disease in California.</title>
        <authorList>
            <person name="Chen J."/>
            <person name="Xie G."/>
            <person name="Han S."/>
            <person name="Chertkov O."/>
            <person name="Sims D."/>
            <person name="Civerolo E.L."/>
        </authorList>
    </citation>
    <scope>NUCLEOTIDE SEQUENCE [LARGE SCALE GENOMIC DNA]</scope>
    <source>
        <strain>M12</strain>
    </source>
</reference>
<proteinExistence type="inferred from homology"/>
<sequence length="216" mass="23972">MVLTIEALKHLWRVDESRVGRTEPLPLDNRHYVNGHPLCDAFTGLAQIQFGLGCFWGAERLFWQLPGVFSTAAGYAGGGVPYPTYREVCSGETGHAEVVLVVYDHTVISFEQLLQTFWESHDPTQGMRQGNDIGTQYRSVIHCTTSEQYAAASASREVYQQQLNTAGYTAITTEILHPAPPFYYAENEHQQYLAKHPNGYCGLGGTGVTCAIRLQV</sequence>